<protein>
    <recommendedName>
        <fullName evidence="4">2-methyl-6-phytyl-1,4-hydroquinone methyltransferase</fullName>
        <ecNumber evidence="3">2.1.1.295</ecNumber>
    </recommendedName>
    <alternativeName>
        <fullName evidence="4">2-methyl-6-phytylbenzoquinone/2-methyl-6-solanyl-1,4-benzoquinone methyltransferase</fullName>
        <shortName evidence="5">MPBQ/MSBQ methyltransferase</shortName>
    </alternativeName>
</protein>
<dbReference type="EC" id="2.1.1.295" evidence="3"/>
<dbReference type="EMBL" id="BA000022">
    <property type="protein sequence ID" value="BAA18485.1"/>
    <property type="molecule type" value="Genomic_DNA"/>
</dbReference>
<dbReference type="PIR" id="S76226">
    <property type="entry name" value="S76226"/>
</dbReference>
<dbReference type="SMR" id="P74388"/>
<dbReference type="IntAct" id="P74388">
    <property type="interactions" value="13"/>
</dbReference>
<dbReference type="STRING" id="1148.gene:10499366"/>
<dbReference type="PaxDb" id="1148-1653572"/>
<dbReference type="EnsemblBacteria" id="BAA18485">
    <property type="protein sequence ID" value="BAA18485"/>
    <property type="gene ID" value="BAA18485"/>
</dbReference>
<dbReference type="KEGG" id="syn:sll0418"/>
<dbReference type="eggNOG" id="COG2226">
    <property type="taxonomic scope" value="Bacteria"/>
</dbReference>
<dbReference type="InParanoid" id="P74388"/>
<dbReference type="PhylomeDB" id="P74388"/>
<dbReference type="BioCyc" id="MetaCyc:MONOMER-13899"/>
<dbReference type="UniPathway" id="UPA00160"/>
<dbReference type="Proteomes" id="UP000001425">
    <property type="component" value="Chromosome"/>
</dbReference>
<dbReference type="GO" id="GO:0102550">
    <property type="term" value="F:2-methyl-6-geranylgeranyl-1,4-benzoquinol methyltransferase activity"/>
    <property type="evidence" value="ECO:0007669"/>
    <property type="project" value="UniProtKB-EC"/>
</dbReference>
<dbReference type="GO" id="GO:0051741">
    <property type="term" value="F:2-methyl-6-phytyl-1,4-benzoquinone methyltransferase activity"/>
    <property type="evidence" value="ECO:0000315"/>
    <property type="project" value="CACAO"/>
</dbReference>
<dbReference type="GO" id="GO:0051742">
    <property type="term" value="F:2-methyl-6-solanyl-1,4-benzoquinone methyltransferase activity"/>
    <property type="evidence" value="ECO:0007669"/>
    <property type="project" value="RHEA"/>
</dbReference>
<dbReference type="GO" id="GO:0008168">
    <property type="term" value="F:methyltransferase activity"/>
    <property type="evidence" value="ECO:0000318"/>
    <property type="project" value="GO_Central"/>
</dbReference>
<dbReference type="GO" id="GO:0032259">
    <property type="term" value="P:methylation"/>
    <property type="evidence" value="ECO:0007669"/>
    <property type="project" value="UniProtKB-KW"/>
</dbReference>
<dbReference type="GO" id="GO:0010189">
    <property type="term" value="P:vitamin E biosynthetic process"/>
    <property type="evidence" value="ECO:0007669"/>
    <property type="project" value="UniProtKB-UniPathway"/>
</dbReference>
<dbReference type="CDD" id="cd02440">
    <property type="entry name" value="AdoMet_MTases"/>
    <property type="match status" value="1"/>
</dbReference>
<dbReference type="FunFam" id="3.40.50.150:FF:000669">
    <property type="entry name" value="Cyanobacterial-type MPBQ/MSBQ methyltransferase"/>
    <property type="match status" value="1"/>
</dbReference>
<dbReference type="Gene3D" id="3.40.50.150">
    <property type="entry name" value="Vaccinia Virus protein VP39"/>
    <property type="match status" value="1"/>
</dbReference>
<dbReference type="InterPro" id="IPR050447">
    <property type="entry name" value="Erg6_SMT_methyltransf"/>
</dbReference>
<dbReference type="InterPro" id="IPR013216">
    <property type="entry name" value="Methyltransf_11"/>
</dbReference>
<dbReference type="InterPro" id="IPR025774">
    <property type="entry name" value="MTs_g-TMT"/>
</dbReference>
<dbReference type="InterPro" id="IPR029063">
    <property type="entry name" value="SAM-dependent_MTases_sf"/>
</dbReference>
<dbReference type="PANTHER" id="PTHR44068:SF11">
    <property type="entry name" value="GERANYL DIPHOSPHATE 2-C-METHYLTRANSFERASE"/>
    <property type="match status" value="1"/>
</dbReference>
<dbReference type="PANTHER" id="PTHR44068">
    <property type="entry name" value="ZGC:194242"/>
    <property type="match status" value="1"/>
</dbReference>
<dbReference type="Pfam" id="PF08241">
    <property type="entry name" value="Methyltransf_11"/>
    <property type="match status" value="1"/>
</dbReference>
<dbReference type="SUPFAM" id="SSF53335">
    <property type="entry name" value="S-adenosyl-L-methionine-dependent methyltransferases"/>
    <property type="match status" value="1"/>
</dbReference>
<dbReference type="PROSITE" id="PS51581">
    <property type="entry name" value="SAM_GTMT"/>
    <property type="match status" value="1"/>
</dbReference>
<proteinExistence type="evidence at protein level"/>
<keyword id="KW-0489">Methyltransferase</keyword>
<keyword id="KW-1185">Reference proteome</keyword>
<keyword id="KW-0949">S-adenosyl-L-methionine</keyword>
<keyword id="KW-0732">Signal</keyword>
<keyword id="KW-0808">Transferase</keyword>
<gene>
    <name evidence="6" type="ordered locus">sll0418</name>
</gene>
<accession>P74388</accession>
<name>BQMT_SYNY3</name>
<organism>
    <name type="scientific">Synechocystis sp. (strain ATCC 27184 / PCC 6803 / Kazusa)</name>
    <dbReference type="NCBI Taxonomy" id="1111708"/>
    <lineage>
        <taxon>Bacteria</taxon>
        <taxon>Bacillati</taxon>
        <taxon>Cyanobacteriota</taxon>
        <taxon>Cyanophyceae</taxon>
        <taxon>Synechococcales</taxon>
        <taxon>Merismopediaceae</taxon>
        <taxon>Synechocystis</taxon>
    </lineage>
</organism>
<sequence length="318" mass="34947">MPEYLLLPAGLISLSLAIAAGLYLLTARGYQSSDSVANAYDQWTEDGILEYYWGDHIHLGHYGDPPVAKDFIQSKIDFVHAMAQWGGLDTLPPGTTVLDVGCGIGGSSRILAKDYGFNVTGITISPQQVKRATELTPPDVTAKFAVDDAMALSFPDGSFDVVWSVEAGPHMPDKAVFAKELLRVVKPGGILVVADWNQRDDRQVPLNFWEKPVMRQLLDQWSHPAFASIEGFAENLEATGLVEGQVTTADWTVPTLPAWLDTIWQGIIRPQGWLQYGIRGFIKSVREVPTILLMRLAFGVGLCRFGMFKAVRKNATQA</sequence>
<evidence type="ECO:0000255" key="1"/>
<evidence type="ECO:0000255" key="2">
    <source>
        <dbReference type="PROSITE-ProRule" id="PRU00914"/>
    </source>
</evidence>
<evidence type="ECO:0000269" key="3">
    <source>
    </source>
</evidence>
<evidence type="ECO:0000303" key="4">
    <source>
    </source>
</evidence>
<evidence type="ECO:0000305" key="5">
    <source>
    </source>
</evidence>
<evidence type="ECO:0000312" key="6">
    <source>
        <dbReference type="EMBL" id="BAA18485.1"/>
    </source>
</evidence>
<feature type="signal peptide" evidence="1">
    <location>
        <begin position="1"/>
        <end position="39"/>
    </location>
</feature>
<feature type="chain" id="PRO_0000431257" description="2-methyl-6-phytyl-1,4-hydroquinone methyltransferase">
    <location>
        <begin position="40"/>
        <end position="318"/>
    </location>
</feature>
<feature type="region of interest" description="SAM motif I" evidence="2">
    <location>
        <begin position="97"/>
        <end position="106"/>
    </location>
</feature>
<feature type="region of interest" description="SAM motif II" evidence="2">
    <location>
        <begin position="157"/>
        <end position="165"/>
    </location>
</feature>
<feature type="region of interest" description="SAM motif III" evidence="2">
    <location>
        <begin position="184"/>
        <end position="193"/>
    </location>
</feature>
<reference key="1">
    <citation type="journal article" date="1996" name="DNA Res.">
        <title>Sequence analysis of the genome of the unicellular cyanobacterium Synechocystis sp. strain PCC6803. II. Sequence determination of the entire genome and assignment of potential protein-coding regions.</title>
        <authorList>
            <person name="Kaneko T."/>
            <person name="Sato S."/>
            <person name="Kotani H."/>
            <person name="Tanaka A."/>
            <person name="Asamizu E."/>
            <person name="Nakamura Y."/>
            <person name="Miyajima N."/>
            <person name="Hirosawa M."/>
            <person name="Sugiura M."/>
            <person name="Sasamoto S."/>
            <person name="Kimura T."/>
            <person name="Hosouchi T."/>
            <person name="Matsuno A."/>
            <person name="Muraki A."/>
            <person name="Nakazaki N."/>
            <person name="Naruo K."/>
            <person name="Okumura S."/>
            <person name="Shimpo S."/>
            <person name="Takeuchi C."/>
            <person name="Wada T."/>
            <person name="Watanabe A."/>
            <person name="Yamada M."/>
            <person name="Yasuda M."/>
            <person name="Tabata S."/>
        </authorList>
    </citation>
    <scope>NUCLEOTIDE SEQUENCE [LARGE SCALE GENOMIC DNA]</scope>
    <source>
        <strain>ATCC 27184 / PCC 6803 / Kazusa</strain>
    </source>
</reference>
<reference key="2">
    <citation type="journal article" date="2002" name="FEBS Lett.">
        <title>The role of 2-methyl-6-phytylbenzoquinone methyltransferase in determining tocopherol composition in Synechocystis sp. PCC6803.</title>
        <authorList>
            <person name="Shintani D.K."/>
            <person name="Cheng Z."/>
            <person name="DellaPenna D."/>
        </authorList>
    </citation>
    <scope>FUNCTION</scope>
    <scope>CATALYTIC ACTIVITY</scope>
    <source>
        <strain>ATCC 27184 / PCC 6803 / N-1</strain>
    </source>
</reference>
<comment type="function">
    <text evidence="3">Involved in a key methylation step in both tocopherol (vitamin E) and plastoquinone synthesis. Catalyzes the conversion of 2-methyl-6-phytyl-1,4-hydroquinol (MPBQ) to 2,3-dimethyl-6-phytyl-1,4-hydroquinol (DMPQ, a substrate for tocopherol cyclase), and 2-methyl-6-solanyl-1,4-benzoquinol (MSBQ) to plastoquinol.</text>
</comment>
<comment type="catalytic activity">
    <reaction evidence="3">
        <text>2-methyl-6-phytyl-1,4-benzene-1,4-diol + S-adenosyl-L-methionine = 2,3-dimethyl-6-phytylbenzene-1,4-diol + S-adenosyl-L-homocysteine + H(+)</text>
        <dbReference type="Rhea" id="RHEA:37979"/>
        <dbReference type="ChEBI" id="CHEBI:15378"/>
        <dbReference type="ChEBI" id="CHEBI:57856"/>
        <dbReference type="ChEBI" id="CHEBI:59789"/>
        <dbReference type="ChEBI" id="CHEBI:75920"/>
        <dbReference type="ChEBI" id="CHEBI:75921"/>
        <dbReference type="EC" id="2.1.1.295"/>
    </reaction>
</comment>
<comment type="catalytic activity">
    <reaction evidence="3">
        <text>2-methyl-6-(all-trans-nonaprenyl)benzene-1,4-diol + S-adenosyl-L-methionine = plastoquinol-9 + S-adenosyl-L-homocysteine + H(+)</text>
        <dbReference type="Rhea" id="RHEA:37999"/>
        <dbReference type="ChEBI" id="CHEBI:15378"/>
        <dbReference type="ChEBI" id="CHEBI:28026"/>
        <dbReference type="ChEBI" id="CHEBI:57856"/>
        <dbReference type="ChEBI" id="CHEBI:59789"/>
        <dbReference type="ChEBI" id="CHEBI:75402"/>
        <dbReference type="EC" id="2.1.1.295"/>
    </reaction>
</comment>
<comment type="catalytic activity">
    <reaction evidence="3">
        <text>6-geranylgeranyl-2-methylbenzene-1,4-diol + S-adenosyl-L-methionine = 6-geranylgeranyl-2,3-dimethylbenzene-1,4-diol + S-adenosyl-L-homocysteine + H(+)</text>
        <dbReference type="Rhea" id="RHEA:38007"/>
        <dbReference type="ChEBI" id="CHEBI:15378"/>
        <dbReference type="ChEBI" id="CHEBI:57856"/>
        <dbReference type="ChEBI" id="CHEBI:59789"/>
        <dbReference type="ChEBI" id="CHEBI:75411"/>
        <dbReference type="ChEBI" id="CHEBI:75412"/>
        <dbReference type="EC" id="2.1.1.295"/>
    </reaction>
</comment>
<comment type="pathway">
    <text evidence="4">Cofactor biosynthesis; tocopherol biosynthesis.</text>
</comment>
<comment type="similarity">
    <text evidence="2">Belongs to the class I-like SAM-binding methyltransferase superfamily. gTMT family.</text>
</comment>